<comment type="function">
    <text evidence="1">Binds to actin and affects the structure of the cytoskeleton. At high concentrations, profilin prevents the polymerization of actin, whereas it enhances it at low concentrations. By binding to PIP2, it inhibits the formation of IP3 and DG (By similarity).</text>
</comment>
<comment type="subunit">
    <text>Occurs in many kinds of cells as a complex with monomeric actin in a 1:1 ratio.</text>
</comment>
<comment type="subcellular location">
    <subcellularLocation>
        <location evidence="1">Cytoplasm</location>
        <location evidence="1">Cytoskeleton</location>
    </subcellularLocation>
</comment>
<comment type="allergen">
    <text>Causes an allergic reaction in human.</text>
</comment>
<comment type="similarity">
    <text evidence="2">Belongs to the profilin family.</text>
</comment>
<keyword id="KW-0009">Actin-binding</keyword>
<keyword id="KW-0020">Allergen</keyword>
<keyword id="KW-0963">Cytoplasm</keyword>
<keyword id="KW-0206">Cytoskeleton</keyword>
<reference key="1">
    <citation type="journal article" date="2004" name="World J. Gastroenterol.">
        <title>Bridging PCR and partially overlapping primers for novel allergen gene cloning and expression insert decoration.</title>
        <authorList>
            <person name="Tao A.L."/>
            <person name="He S.H."/>
        </authorList>
    </citation>
    <scope>NUCLEOTIDE SEQUENCE [MRNA]</scope>
    <source>
        <tissue>Pollen</tissue>
    </source>
</reference>
<proteinExistence type="evidence at protein level"/>
<evidence type="ECO:0000250" key="1"/>
<evidence type="ECO:0000305" key="2"/>
<sequence>MSWQAYVDDHLMCEIEGNHLSAAAIIGHDGVVWAQSATFPQVKPEEITGIMNDFNEPGSLAPTGLYLGGTKYMVIQGEPGAVIRGKKGPGGVTIKKTTMSLIIGIYDEPMTPGQCNMLVERPGDYLLEQGF</sequence>
<organism>
    <name type="scientific">Ambrosia artemisiifolia</name>
    <name type="common">Common ragweed</name>
    <dbReference type="NCBI Taxonomy" id="4212"/>
    <lineage>
        <taxon>Eukaryota</taxon>
        <taxon>Viridiplantae</taxon>
        <taxon>Streptophyta</taxon>
        <taxon>Embryophyta</taxon>
        <taxon>Tracheophyta</taxon>
        <taxon>Spermatophyta</taxon>
        <taxon>Magnoliopsida</taxon>
        <taxon>eudicotyledons</taxon>
        <taxon>Gunneridae</taxon>
        <taxon>Pentapetalae</taxon>
        <taxon>asterids</taxon>
        <taxon>campanulids</taxon>
        <taxon>Asterales</taxon>
        <taxon>Asteraceae</taxon>
        <taxon>Asteroideae</taxon>
        <taxon>Heliantheae alliance</taxon>
        <taxon>Heliantheae</taxon>
        <taxon>Ambrosia</taxon>
    </lineage>
</organism>
<protein>
    <recommendedName>
        <fullName>Profilin-1</fullName>
    </recommendedName>
    <alternativeName>
        <fullName>Pollen allergen Amb a 8</fullName>
    </alternativeName>
    <allergenName>Amb a 8</allergenName>
</protein>
<name>PROF1_AMBAR</name>
<dbReference type="EMBL" id="AY268426">
    <property type="protein sequence ID" value="AAP15202.1"/>
    <property type="molecule type" value="mRNA"/>
</dbReference>
<dbReference type="SMR" id="Q64LH1"/>
<dbReference type="Allergome" id="751">
    <property type="allergen name" value="Amb a 8"/>
</dbReference>
<dbReference type="GO" id="GO:0005938">
    <property type="term" value="C:cell cortex"/>
    <property type="evidence" value="ECO:0007669"/>
    <property type="project" value="TreeGrafter"/>
</dbReference>
<dbReference type="GO" id="GO:0005856">
    <property type="term" value="C:cytoskeleton"/>
    <property type="evidence" value="ECO:0007669"/>
    <property type="project" value="UniProtKB-SubCell"/>
</dbReference>
<dbReference type="GO" id="GO:0003785">
    <property type="term" value="F:actin monomer binding"/>
    <property type="evidence" value="ECO:0007669"/>
    <property type="project" value="TreeGrafter"/>
</dbReference>
<dbReference type="CDD" id="cd00148">
    <property type="entry name" value="PROF"/>
    <property type="match status" value="1"/>
</dbReference>
<dbReference type="FunFam" id="3.30.450.30:FF:000001">
    <property type="entry name" value="Profilin"/>
    <property type="match status" value="1"/>
</dbReference>
<dbReference type="Gene3D" id="3.30.450.30">
    <property type="entry name" value="Dynein light chain 2a, cytoplasmic"/>
    <property type="match status" value="1"/>
</dbReference>
<dbReference type="InterPro" id="IPR048278">
    <property type="entry name" value="PFN"/>
</dbReference>
<dbReference type="InterPro" id="IPR005455">
    <property type="entry name" value="PFN_euk"/>
</dbReference>
<dbReference type="InterPro" id="IPR036140">
    <property type="entry name" value="PFN_sf"/>
</dbReference>
<dbReference type="InterPro" id="IPR027310">
    <property type="entry name" value="Profilin_CS"/>
</dbReference>
<dbReference type="PANTHER" id="PTHR11604">
    <property type="entry name" value="PROFILIN"/>
    <property type="match status" value="1"/>
</dbReference>
<dbReference type="PANTHER" id="PTHR11604:SF49">
    <property type="entry name" value="PROFILIN-2"/>
    <property type="match status" value="1"/>
</dbReference>
<dbReference type="Pfam" id="PF00235">
    <property type="entry name" value="Profilin"/>
    <property type="match status" value="1"/>
</dbReference>
<dbReference type="PRINTS" id="PR00392">
    <property type="entry name" value="PROFILIN"/>
</dbReference>
<dbReference type="PRINTS" id="PR01640">
    <property type="entry name" value="PROFILINPLNT"/>
</dbReference>
<dbReference type="SMART" id="SM00392">
    <property type="entry name" value="PROF"/>
    <property type="match status" value="1"/>
</dbReference>
<dbReference type="SUPFAM" id="SSF55770">
    <property type="entry name" value="Profilin (actin-binding protein)"/>
    <property type="match status" value="1"/>
</dbReference>
<dbReference type="PROSITE" id="PS00414">
    <property type="entry name" value="PROFILIN"/>
    <property type="match status" value="1"/>
</dbReference>
<gene>
    <name type="ORF">D106</name>
</gene>
<accession>Q64LH1</accession>
<feature type="initiator methionine" description="Removed" evidence="1">
    <location>
        <position position="1"/>
    </location>
</feature>
<feature type="chain" id="PRO_0000199609" description="Profilin-1">
    <location>
        <begin position="2"/>
        <end position="131"/>
    </location>
</feature>